<feature type="chain" id="PRO_1000203689" description="tRNA pseudouridine synthase A">
    <location>
        <begin position="1"/>
        <end position="274"/>
    </location>
</feature>
<feature type="active site" description="Nucleophile" evidence="1">
    <location>
        <position position="54"/>
    </location>
</feature>
<feature type="binding site" evidence="1">
    <location>
        <position position="112"/>
    </location>
    <ligand>
        <name>substrate</name>
    </ligand>
</feature>
<protein>
    <recommendedName>
        <fullName evidence="1">tRNA pseudouridine synthase A</fullName>
        <ecNumber evidence="1">5.4.99.12</ecNumber>
    </recommendedName>
    <alternativeName>
        <fullName evidence="1">tRNA pseudouridine(38-40) synthase</fullName>
    </alternativeName>
    <alternativeName>
        <fullName evidence="1">tRNA pseudouridylate synthase I</fullName>
    </alternativeName>
    <alternativeName>
        <fullName evidence="1">tRNA-uridine isomerase I</fullName>
    </alternativeName>
</protein>
<sequence length="274" mass="29066">MARLRLTLAYDGTDFAGWQIQAAGGGRTVQGCLEEALATLCGQPVRVHGAGRTDSGVHALAQVAHADVPEHRAGLPWGKALTALLPKDVAVTEARLVAPDFHSRFDATGKEYRYTLWTRPGHVLPWRRPYVWDVGRYGTLDVAAMEACAGLFVGEHDFAAFQNAGTDVHSTVRRVWDVSRLAGTGPDETVWRFHGEGFLKQMVRNLMGALVAVGRGKATAEDVATLLAAGDRRRAPGTAPAQGLCLHAVEYGAPGVAGLPGLGDKPAEPAGSTT</sequence>
<gene>
    <name evidence="1" type="primary">truA</name>
    <name type="ordered locus">DMR_42080</name>
</gene>
<reference key="1">
    <citation type="journal article" date="2009" name="Genome Res.">
        <title>Whole genome sequence of Desulfovibrio magneticus strain RS-1 revealed common gene clusters in magnetotactic bacteria.</title>
        <authorList>
            <person name="Nakazawa H."/>
            <person name="Arakaki A."/>
            <person name="Narita-Yamada S."/>
            <person name="Yashiro I."/>
            <person name="Jinno K."/>
            <person name="Aoki N."/>
            <person name="Tsuruyama A."/>
            <person name="Okamura Y."/>
            <person name="Tanikawa S."/>
            <person name="Fujita N."/>
            <person name="Takeyama H."/>
            <person name="Matsunaga T."/>
        </authorList>
    </citation>
    <scope>NUCLEOTIDE SEQUENCE [LARGE SCALE GENOMIC DNA]</scope>
    <source>
        <strain>ATCC 700980 / DSM 13731 / RS-1</strain>
    </source>
</reference>
<accession>C4XPZ9</accession>
<dbReference type="EC" id="5.4.99.12" evidence="1"/>
<dbReference type="EMBL" id="AP010904">
    <property type="protein sequence ID" value="BAH77699.1"/>
    <property type="molecule type" value="Genomic_DNA"/>
</dbReference>
<dbReference type="RefSeq" id="WP_015862824.1">
    <property type="nucleotide sequence ID" value="NC_012796.1"/>
</dbReference>
<dbReference type="SMR" id="C4XPZ9"/>
<dbReference type="STRING" id="573370.DMR_42080"/>
<dbReference type="KEGG" id="dma:DMR_42080"/>
<dbReference type="eggNOG" id="COG0101">
    <property type="taxonomic scope" value="Bacteria"/>
</dbReference>
<dbReference type="HOGENOM" id="CLU_014673_0_1_7"/>
<dbReference type="OrthoDB" id="9811823at2"/>
<dbReference type="Proteomes" id="UP000009071">
    <property type="component" value="Chromosome"/>
</dbReference>
<dbReference type="GO" id="GO:0003723">
    <property type="term" value="F:RNA binding"/>
    <property type="evidence" value="ECO:0007669"/>
    <property type="project" value="InterPro"/>
</dbReference>
<dbReference type="GO" id="GO:0160147">
    <property type="term" value="F:tRNA pseudouridine(38-40) synthase activity"/>
    <property type="evidence" value="ECO:0007669"/>
    <property type="project" value="UniProtKB-EC"/>
</dbReference>
<dbReference type="GO" id="GO:0031119">
    <property type="term" value="P:tRNA pseudouridine synthesis"/>
    <property type="evidence" value="ECO:0007669"/>
    <property type="project" value="UniProtKB-UniRule"/>
</dbReference>
<dbReference type="CDD" id="cd02570">
    <property type="entry name" value="PseudoU_synth_EcTruA"/>
    <property type="match status" value="1"/>
</dbReference>
<dbReference type="FunFam" id="3.30.70.580:FF:000001">
    <property type="entry name" value="tRNA pseudouridine synthase A"/>
    <property type="match status" value="1"/>
</dbReference>
<dbReference type="Gene3D" id="3.30.70.660">
    <property type="entry name" value="Pseudouridine synthase I, catalytic domain, C-terminal subdomain"/>
    <property type="match status" value="1"/>
</dbReference>
<dbReference type="Gene3D" id="3.30.70.580">
    <property type="entry name" value="Pseudouridine synthase I, catalytic domain, N-terminal subdomain"/>
    <property type="match status" value="1"/>
</dbReference>
<dbReference type="HAMAP" id="MF_00171">
    <property type="entry name" value="TruA"/>
    <property type="match status" value="1"/>
</dbReference>
<dbReference type="InterPro" id="IPR020103">
    <property type="entry name" value="PsdUridine_synth_cat_dom_sf"/>
</dbReference>
<dbReference type="InterPro" id="IPR001406">
    <property type="entry name" value="PsdUridine_synth_TruA"/>
</dbReference>
<dbReference type="InterPro" id="IPR020097">
    <property type="entry name" value="PsdUridine_synth_TruA_a/b_dom"/>
</dbReference>
<dbReference type="InterPro" id="IPR020095">
    <property type="entry name" value="PsdUridine_synth_TruA_C"/>
</dbReference>
<dbReference type="InterPro" id="IPR020094">
    <property type="entry name" value="TruA/RsuA/RluB/E/F_N"/>
</dbReference>
<dbReference type="NCBIfam" id="TIGR00071">
    <property type="entry name" value="hisT_truA"/>
    <property type="match status" value="1"/>
</dbReference>
<dbReference type="PANTHER" id="PTHR11142">
    <property type="entry name" value="PSEUDOURIDYLATE SYNTHASE"/>
    <property type="match status" value="1"/>
</dbReference>
<dbReference type="PANTHER" id="PTHR11142:SF0">
    <property type="entry name" value="TRNA PSEUDOURIDINE SYNTHASE-LIKE 1"/>
    <property type="match status" value="1"/>
</dbReference>
<dbReference type="Pfam" id="PF01416">
    <property type="entry name" value="PseudoU_synth_1"/>
    <property type="match status" value="2"/>
</dbReference>
<dbReference type="PIRSF" id="PIRSF001430">
    <property type="entry name" value="tRNA_psdUrid_synth"/>
    <property type="match status" value="1"/>
</dbReference>
<dbReference type="SUPFAM" id="SSF55120">
    <property type="entry name" value="Pseudouridine synthase"/>
    <property type="match status" value="1"/>
</dbReference>
<name>TRUA_SOLM1</name>
<proteinExistence type="inferred from homology"/>
<organism>
    <name type="scientific">Solidesulfovibrio magneticus (strain ATCC 700980 / DSM 13731 / RS-1)</name>
    <name type="common">Desulfovibrio magneticus</name>
    <dbReference type="NCBI Taxonomy" id="573370"/>
    <lineage>
        <taxon>Bacteria</taxon>
        <taxon>Pseudomonadati</taxon>
        <taxon>Thermodesulfobacteriota</taxon>
        <taxon>Desulfovibrionia</taxon>
        <taxon>Desulfovibrionales</taxon>
        <taxon>Desulfovibrionaceae</taxon>
        <taxon>Solidesulfovibrio</taxon>
    </lineage>
</organism>
<keyword id="KW-0413">Isomerase</keyword>
<keyword id="KW-0819">tRNA processing</keyword>
<comment type="function">
    <text evidence="1">Formation of pseudouridine at positions 38, 39 and 40 in the anticodon stem and loop of transfer RNAs.</text>
</comment>
<comment type="catalytic activity">
    <reaction evidence="1">
        <text>uridine(38/39/40) in tRNA = pseudouridine(38/39/40) in tRNA</text>
        <dbReference type="Rhea" id="RHEA:22376"/>
        <dbReference type="Rhea" id="RHEA-COMP:10085"/>
        <dbReference type="Rhea" id="RHEA-COMP:10087"/>
        <dbReference type="ChEBI" id="CHEBI:65314"/>
        <dbReference type="ChEBI" id="CHEBI:65315"/>
        <dbReference type="EC" id="5.4.99.12"/>
    </reaction>
</comment>
<comment type="subunit">
    <text evidence="1">Homodimer.</text>
</comment>
<comment type="similarity">
    <text evidence="1">Belongs to the tRNA pseudouridine synthase TruA family.</text>
</comment>
<evidence type="ECO:0000255" key="1">
    <source>
        <dbReference type="HAMAP-Rule" id="MF_00171"/>
    </source>
</evidence>